<dbReference type="EMBL" id="D14055">
    <property type="protein sequence ID" value="BAA03143.1"/>
    <property type="molecule type" value="Genomic_DNA"/>
</dbReference>
<dbReference type="EMBL" id="AY725270">
    <property type="protein sequence ID" value="AAV92717.1"/>
    <property type="molecule type" value="Genomic_DNA"/>
</dbReference>
<dbReference type="EMBL" id="AY725271">
    <property type="protein sequence ID" value="AAV92718.1"/>
    <property type="molecule type" value="Genomic_DNA"/>
</dbReference>
<dbReference type="EMBL" id="AY725272">
    <property type="protein sequence ID" value="AAV92719.1"/>
    <property type="molecule type" value="Genomic_DNA"/>
</dbReference>
<dbReference type="EMBL" id="AY725273">
    <property type="protein sequence ID" value="AAV92720.1"/>
    <property type="molecule type" value="Genomic_DNA"/>
</dbReference>
<dbReference type="EMBL" id="AY725274">
    <property type="protein sequence ID" value="AAV92721.1"/>
    <property type="molecule type" value="Genomic_DNA"/>
</dbReference>
<dbReference type="EMBL" id="AY725275">
    <property type="protein sequence ID" value="AAV92722.1"/>
    <property type="molecule type" value="Genomic_DNA"/>
</dbReference>
<dbReference type="EMBL" id="AY725276">
    <property type="protein sequence ID" value="AAV92723.1"/>
    <property type="molecule type" value="Genomic_DNA"/>
</dbReference>
<dbReference type="EMBL" id="AY725277">
    <property type="protein sequence ID" value="AAV92724.1"/>
    <property type="molecule type" value="Genomic_DNA"/>
</dbReference>
<dbReference type="EMBL" id="AY725278">
    <property type="protein sequence ID" value="AAV92725.1"/>
    <property type="molecule type" value="Genomic_DNA"/>
</dbReference>
<dbReference type="EMBL" id="AY725279">
    <property type="protein sequence ID" value="AAV92726.1"/>
    <property type="molecule type" value="Genomic_DNA"/>
</dbReference>
<dbReference type="EMBL" id="AY725280">
    <property type="protein sequence ID" value="AAV92727.1"/>
    <property type="molecule type" value="Genomic_DNA"/>
</dbReference>
<dbReference type="EMBL" id="AY725281">
    <property type="protein sequence ID" value="AAV92728.1"/>
    <property type="molecule type" value="Genomic_DNA"/>
</dbReference>
<dbReference type="EMBL" id="AY725282">
    <property type="protein sequence ID" value="AAV92729.1"/>
    <property type="molecule type" value="Genomic_DNA"/>
</dbReference>
<dbReference type="EMBL" id="AY725283">
    <property type="protein sequence ID" value="AAV92730.1"/>
    <property type="molecule type" value="Genomic_DNA"/>
</dbReference>
<dbReference type="EMBL" id="AY725284">
    <property type="protein sequence ID" value="AAV92731.1"/>
    <property type="molecule type" value="Genomic_DNA"/>
</dbReference>
<dbReference type="EMBL" id="AY725285">
    <property type="protein sequence ID" value="AAV92732.1"/>
    <property type="molecule type" value="Genomic_DNA"/>
</dbReference>
<dbReference type="EMBL" id="AY725286">
    <property type="protein sequence ID" value="AAV92733.1"/>
    <property type="molecule type" value="Genomic_DNA"/>
</dbReference>
<dbReference type="EMBL" id="AY725287">
    <property type="protein sequence ID" value="AAV92734.1"/>
    <property type="molecule type" value="Genomic_DNA"/>
</dbReference>
<dbReference type="EMBL" id="AY725288">
    <property type="protein sequence ID" value="AAV92735.1"/>
    <property type="molecule type" value="Genomic_DNA"/>
</dbReference>
<dbReference type="EMBL" id="AY725289">
    <property type="protein sequence ID" value="AAV92736.1"/>
    <property type="molecule type" value="Genomic_DNA"/>
</dbReference>
<dbReference type="EMBL" id="AY725290">
    <property type="protein sequence ID" value="AAV92737.1"/>
    <property type="molecule type" value="Genomic_DNA"/>
</dbReference>
<dbReference type="EMBL" id="AY725291">
    <property type="protein sequence ID" value="AAV92738.1"/>
    <property type="molecule type" value="Genomic_DNA"/>
</dbReference>
<dbReference type="EMBL" id="AY725292">
    <property type="protein sequence ID" value="AAV92739.1"/>
    <property type="molecule type" value="Genomic_DNA"/>
</dbReference>
<dbReference type="EMBL" id="AY725293">
    <property type="protein sequence ID" value="AAV92740.1"/>
    <property type="molecule type" value="Genomic_DNA"/>
</dbReference>
<dbReference type="EMBL" id="AY725294">
    <property type="protein sequence ID" value="AAV92741.1"/>
    <property type="molecule type" value="Genomic_DNA"/>
</dbReference>
<dbReference type="EMBL" id="AY725295">
    <property type="protein sequence ID" value="AAV92742.1"/>
    <property type="molecule type" value="Genomic_DNA"/>
</dbReference>
<dbReference type="EMBL" id="AY725296">
    <property type="protein sequence ID" value="AAV92743.1"/>
    <property type="molecule type" value="Genomic_DNA"/>
</dbReference>
<dbReference type="EMBL" id="AY725297">
    <property type="protein sequence ID" value="AAV92744.1"/>
    <property type="molecule type" value="Genomic_DNA"/>
</dbReference>
<dbReference type="EMBL" id="AY725298">
    <property type="protein sequence ID" value="AAV92745.1"/>
    <property type="molecule type" value="Genomic_DNA"/>
</dbReference>
<dbReference type="EMBL" id="AY725299">
    <property type="protein sequence ID" value="AAV92746.1"/>
    <property type="molecule type" value="Genomic_DNA"/>
</dbReference>
<dbReference type="EMBL" id="AY725300">
    <property type="protein sequence ID" value="AAV92747.1"/>
    <property type="molecule type" value="Genomic_DNA"/>
</dbReference>
<dbReference type="EMBL" id="AY725301">
    <property type="protein sequence ID" value="AAV92748.1"/>
    <property type="molecule type" value="Genomic_DNA"/>
</dbReference>
<dbReference type="EMBL" id="AY725302">
    <property type="protein sequence ID" value="AAV92749.1"/>
    <property type="molecule type" value="Genomic_DNA"/>
</dbReference>
<dbReference type="EMBL" id="AY725303">
    <property type="protein sequence ID" value="AAV92750.1"/>
    <property type="molecule type" value="Genomic_DNA"/>
</dbReference>
<dbReference type="EMBL" id="AY725304">
    <property type="protein sequence ID" value="AAV92751.1"/>
    <property type="molecule type" value="Genomic_DNA"/>
</dbReference>
<dbReference type="EMBL" id="AY725305">
    <property type="protein sequence ID" value="AAV92752.1"/>
    <property type="molecule type" value="Genomic_DNA"/>
</dbReference>
<dbReference type="EMBL" id="AY725306">
    <property type="protein sequence ID" value="AAV92753.1"/>
    <property type="molecule type" value="Genomic_DNA"/>
</dbReference>
<dbReference type="EMBL" id="AY725307">
    <property type="protein sequence ID" value="AAV92754.1"/>
    <property type="molecule type" value="Genomic_DNA"/>
</dbReference>
<dbReference type="EMBL" id="AY725308">
    <property type="protein sequence ID" value="AAV92755.1"/>
    <property type="molecule type" value="Genomic_DNA"/>
</dbReference>
<dbReference type="EMBL" id="AY725309">
    <property type="protein sequence ID" value="AAV92756.1"/>
    <property type="molecule type" value="Genomic_DNA"/>
</dbReference>
<dbReference type="EMBL" id="AY725310">
    <property type="protein sequence ID" value="AAV92757.1"/>
    <property type="molecule type" value="Genomic_DNA"/>
</dbReference>
<dbReference type="EMBL" id="AY725311">
    <property type="protein sequence ID" value="AAV92758.1"/>
    <property type="molecule type" value="Genomic_DNA"/>
</dbReference>
<dbReference type="EMBL" id="AY725312">
    <property type="protein sequence ID" value="AAV92759.1"/>
    <property type="molecule type" value="Genomic_DNA"/>
</dbReference>
<dbReference type="EMBL" id="AY725313">
    <property type="protein sequence ID" value="AAV92760.1"/>
    <property type="molecule type" value="Genomic_DNA"/>
</dbReference>
<dbReference type="EMBL" id="AY725314">
    <property type="protein sequence ID" value="AAV92761.1"/>
    <property type="molecule type" value="Genomic_DNA"/>
</dbReference>
<dbReference type="EMBL" id="AY725315">
    <property type="protein sequence ID" value="AAV92762.1"/>
    <property type="molecule type" value="Genomic_DNA"/>
</dbReference>
<dbReference type="EMBL" id="AY725316">
    <property type="protein sequence ID" value="AAV92763.1"/>
    <property type="molecule type" value="Genomic_DNA"/>
</dbReference>
<dbReference type="EMBL" id="AY725317">
    <property type="protein sequence ID" value="AAV92764.1"/>
    <property type="molecule type" value="Genomic_DNA"/>
</dbReference>
<dbReference type="EMBL" id="AY725318">
    <property type="protein sequence ID" value="AAV92765.1"/>
    <property type="molecule type" value="Genomic_DNA"/>
</dbReference>
<dbReference type="EMBL" id="AY725319">
    <property type="protein sequence ID" value="AAV92766.1"/>
    <property type="molecule type" value="Genomic_DNA"/>
</dbReference>
<dbReference type="EMBL" id="AY725320">
    <property type="protein sequence ID" value="AAV92767.1"/>
    <property type="molecule type" value="Genomic_DNA"/>
</dbReference>
<dbReference type="EMBL" id="AY725321">
    <property type="protein sequence ID" value="AAV92768.1"/>
    <property type="molecule type" value="Genomic_DNA"/>
</dbReference>
<dbReference type="EMBL" id="AY725322">
    <property type="protein sequence ID" value="AAV92769.1"/>
    <property type="molecule type" value="Genomic_DNA"/>
</dbReference>
<dbReference type="EMBL" id="AY725323">
    <property type="protein sequence ID" value="AAV92770.1"/>
    <property type="molecule type" value="Genomic_DNA"/>
</dbReference>
<dbReference type="EMBL" id="AY725324">
    <property type="protein sequence ID" value="AAV92771.1"/>
    <property type="molecule type" value="Genomic_DNA"/>
</dbReference>
<dbReference type="EMBL" id="AY725325">
    <property type="protein sequence ID" value="AAV92772.1"/>
    <property type="molecule type" value="Genomic_DNA"/>
</dbReference>
<dbReference type="EMBL" id="AY725326">
    <property type="protein sequence ID" value="AAV92773.1"/>
    <property type="molecule type" value="Genomic_DNA"/>
</dbReference>
<dbReference type="EMBL" id="AY725327">
    <property type="protein sequence ID" value="AAV92774.1"/>
    <property type="molecule type" value="Genomic_DNA"/>
</dbReference>
<dbReference type="EMBL" id="AY725328">
    <property type="protein sequence ID" value="AAV92775.1"/>
    <property type="molecule type" value="Genomic_DNA"/>
</dbReference>
<dbReference type="EMBL" id="AY725329">
    <property type="protein sequence ID" value="AAV92776.1"/>
    <property type="molecule type" value="Genomic_DNA"/>
</dbReference>
<dbReference type="EMBL" id="AY725330">
    <property type="protein sequence ID" value="AAV92777.1"/>
    <property type="molecule type" value="Genomic_DNA"/>
</dbReference>
<dbReference type="EMBL" id="AY725331">
    <property type="protein sequence ID" value="AAV92778.1"/>
    <property type="molecule type" value="Genomic_DNA"/>
</dbReference>
<dbReference type="EMBL" id="AY725332">
    <property type="protein sequence ID" value="AAV92779.1"/>
    <property type="molecule type" value="Genomic_DNA"/>
</dbReference>
<dbReference type="EMBL" id="AY725333">
    <property type="protein sequence ID" value="AAV92780.1"/>
    <property type="molecule type" value="Genomic_DNA"/>
</dbReference>
<dbReference type="EMBL" id="U14003">
    <property type="protein sequence ID" value="AAA97012.1"/>
    <property type="molecule type" value="Genomic_DNA"/>
</dbReference>
<dbReference type="EMBL" id="U00096">
    <property type="protein sequence ID" value="AAC77074.1"/>
    <property type="molecule type" value="Genomic_DNA"/>
</dbReference>
<dbReference type="EMBL" id="AP009048">
    <property type="protein sequence ID" value="BAE78115.1"/>
    <property type="molecule type" value="Genomic_DNA"/>
</dbReference>
<dbReference type="PIR" id="H65220">
    <property type="entry name" value="H65220"/>
</dbReference>
<dbReference type="RefSeq" id="NP_418537.1">
    <property type="nucleotide sequence ID" value="NC_000913.3"/>
</dbReference>
<dbReference type="RefSeq" id="WP_000697919.1">
    <property type="nucleotide sequence ID" value="NZ_STEB01000014.1"/>
</dbReference>
<dbReference type="RefSeq" id="WP_000697926.1">
    <property type="nucleotide sequence ID" value="NZ_LN832404.1"/>
</dbReference>
<dbReference type="SMR" id="P30843"/>
<dbReference type="BioGRID" id="4263083">
    <property type="interactions" value="101"/>
</dbReference>
<dbReference type="DIP" id="DIP-9201N"/>
<dbReference type="FunCoup" id="P30843">
    <property type="interactions" value="239"/>
</dbReference>
<dbReference type="IntAct" id="P30843">
    <property type="interactions" value="5"/>
</dbReference>
<dbReference type="STRING" id="511145.b4113"/>
<dbReference type="jPOST" id="P30843"/>
<dbReference type="PaxDb" id="511145-b4113"/>
<dbReference type="EnsemblBacteria" id="AAC77074">
    <property type="protein sequence ID" value="AAC77074"/>
    <property type="gene ID" value="b4113"/>
</dbReference>
<dbReference type="GeneID" id="948631"/>
<dbReference type="KEGG" id="ecj:JW4074"/>
<dbReference type="KEGG" id="eco:b4113"/>
<dbReference type="KEGG" id="ecoc:C3026_22225"/>
<dbReference type="PATRIC" id="fig|1411691.4.peg.2587"/>
<dbReference type="EchoBASE" id="EB1572"/>
<dbReference type="eggNOG" id="COG0745">
    <property type="taxonomic scope" value="Bacteria"/>
</dbReference>
<dbReference type="HOGENOM" id="CLU_000445_30_1_6"/>
<dbReference type="InParanoid" id="P30843"/>
<dbReference type="OMA" id="YQGHSDN"/>
<dbReference type="OrthoDB" id="9802426at2"/>
<dbReference type="PhylomeDB" id="P30843"/>
<dbReference type="BioCyc" id="EcoCyc:BASR-MONOMER"/>
<dbReference type="PRO" id="PR:P30843"/>
<dbReference type="Proteomes" id="UP000000625">
    <property type="component" value="Chromosome"/>
</dbReference>
<dbReference type="GO" id="GO:0005829">
    <property type="term" value="C:cytosol"/>
    <property type="evidence" value="ECO:0000318"/>
    <property type="project" value="GO_Central"/>
</dbReference>
<dbReference type="GO" id="GO:0032993">
    <property type="term" value="C:protein-DNA complex"/>
    <property type="evidence" value="ECO:0000318"/>
    <property type="project" value="GO_Central"/>
</dbReference>
<dbReference type="GO" id="GO:0000156">
    <property type="term" value="F:phosphorelay response regulator activity"/>
    <property type="evidence" value="ECO:0000314"/>
    <property type="project" value="EcoCyc"/>
</dbReference>
<dbReference type="GO" id="GO:0000976">
    <property type="term" value="F:transcription cis-regulatory region binding"/>
    <property type="evidence" value="ECO:0000318"/>
    <property type="project" value="GO_Central"/>
</dbReference>
<dbReference type="GO" id="GO:0000160">
    <property type="term" value="P:phosphorelay signal transduction system"/>
    <property type="evidence" value="ECO:0000314"/>
    <property type="project" value="EcoCyc"/>
</dbReference>
<dbReference type="GO" id="GO:0006355">
    <property type="term" value="P:regulation of DNA-templated transcription"/>
    <property type="evidence" value="ECO:0000315"/>
    <property type="project" value="EcoCyc"/>
</dbReference>
<dbReference type="GO" id="GO:0046677">
    <property type="term" value="P:response to antibiotic"/>
    <property type="evidence" value="ECO:0007669"/>
    <property type="project" value="UniProtKB-KW"/>
</dbReference>
<dbReference type="GO" id="GO:0010041">
    <property type="term" value="P:response to iron(III) ion"/>
    <property type="evidence" value="ECO:0000315"/>
    <property type="project" value="EcoCyc"/>
</dbReference>
<dbReference type="CDD" id="cd17624">
    <property type="entry name" value="REC_OmpR_PmrA-like"/>
    <property type="match status" value="1"/>
</dbReference>
<dbReference type="CDD" id="cd00383">
    <property type="entry name" value="trans_reg_C"/>
    <property type="match status" value="1"/>
</dbReference>
<dbReference type="FunFam" id="1.10.10.10:FF:000005">
    <property type="entry name" value="Two-component system response regulator"/>
    <property type="match status" value="1"/>
</dbReference>
<dbReference type="Gene3D" id="3.40.50.2300">
    <property type="match status" value="1"/>
</dbReference>
<dbReference type="Gene3D" id="6.10.250.690">
    <property type="match status" value="1"/>
</dbReference>
<dbReference type="Gene3D" id="1.10.10.10">
    <property type="entry name" value="Winged helix-like DNA-binding domain superfamily/Winged helix DNA-binding domain"/>
    <property type="match status" value="1"/>
</dbReference>
<dbReference type="InterPro" id="IPR011006">
    <property type="entry name" value="CheY-like_superfamily"/>
</dbReference>
<dbReference type="InterPro" id="IPR001867">
    <property type="entry name" value="OmpR/PhoB-type_DNA-bd"/>
</dbReference>
<dbReference type="InterPro" id="IPR016032">
    <property type="entry name" value="Sig_transdc_resp-reg_C-effctor"/>
</dbReference>
<dbReference type="InterPro" id="IPR001789">
    <property type="entry name" value="Sig_transdc_resp-reg_receiver"/>
</dbReference>
<dbReference type="InterPro" id="IPR039420">
    <property type="entry name" value="WalR-like"/>
</dbReference>
<dbReference type="InterPro" id="IPR036388">
    <property type="entry name" value="WH-like_DNA-bd_sf"/>
</dbReference>
<dbReference type="NCBIfam" id="NF007928">
    <property type="entry name" value="PRK10643.1"/>
    <property type="match status" value="1"/>
</dbReference>
<dbReference type="PANTHER" id="PTHR48111">
    <property type="entry name" value="REGULATOR OF RPOS"/>
    <property type="match status" value="1"/>
</dbReference>
<dbReference type="PANTHER" id="PTHR48111:SF75">
    <property type="entry name" value="TRANSCRIPTIONAL REGULATORY PROTEIN BASR"/>
    <property type="match status" value="1"/>
</dbReference>
<dbReference type="Pfam" id="PF00072">
    <property type="entry name" value="Response_reg"/>
    <property type="match status" value="1"/>
</dbReference>
<dbReference type="Pfam" id="PF00486">
    <property type="entry name" value="Trans_reg_C"/>
    <property type="match status" value="1"/>
</dbReference>
<dbReference type="SMART" id="SM00448">
    <property type="entry name" value="REC"/>
    <property type="match status" value="1"/>
</dbReference>
<dbReference type="SMART" id="SM00862">
    <property type="entry name" value="Trans_reg_C"/>
    <property type="match status" value="1"/>
</dbReference>
<dbReference type="SUPFAM" id="SSF46894">
    <property type="entry name" value="C-terminal effector domain of the bipartite response regulators"/>
    <property type="match status" value="1"/>
</dbReference>
<dbReference type="SUPFAM" id="SSF52172">
    <property type="entry name" value="CheY-like"/>
    <property type="match status" value="1"/>
</dbReference>
<dbReference type="PROSITE" id="PS51755">
    <property type="entry name" value="OMPR_PHOB"/>
    <property type="match status" value="1"/>
</dbReference>
<dbReference type="PROSITE" id="PS50110">
    <property type="entry name" value="RESPONSE_REGULATORY"/>
    <property type="match status" value="1"/>
</dbReference>
<protein>
    <recommendedName>
        <fullName>Transcriptional regulatory protein BasR</fullName>
    </recommendedName>
</protein>
<organism>
    <name type="scientific">Escherichia coli (strain K12)</name>
    <dbReference type="NCBI Taxonomy" id="83333"/>
    <lineage>
        <taxon>Bacteria</taxon>
        <taxon>Pseudomonadati</taxon>
        <taxon>Pseudomonadota</taxon>
        <taxon>Gammaproteobacteria</taxon>
        <taxon>Enterobacterales</taxon>
        <taxon>Enterobacteriaceae</taxon>
        <taxon>Escherichia</taxon>
    </lineage>
</organism>
<reference key="1">
    <citation type="journal article" date="1993" name="J. Biochem.">
        <title>Novel members of the two-component signal transduction genes in Escherichia coli.</title>
        <authorList>
            <person name="Nagasawa S."/>
            <person name="Ishige K."/>
            <person name="Mizuno T."/>
        </authorList>
    </citation>
    <scope>NUCLEOTIDE SEQUENCE [GENOMIC DNA]</scope>
    <source>
        <strain>K12</strain>
    </source>
</reference>
<reference key="2">
    <citation type="journal article" date="2004" name="Proc. Natl. Acad. Sci. U.S.A.">
        <title>Phenotypic differences between Salmonella and Escherichia coli resulting from the disparate regulation of homologous genes.</title>
        <authorList>
            <person name="Winfield M.D."/>
            <person name="Groisman E.A."/>
        </authorList>
    </citation>
    <scope>NUCLEOTIDE SEQUENCE [GENOMIC DNA]</scope>
    <scope>REGULATION BY PMRD</scope>
    <source>
        <strain>ECOR 1</strain>
        <strain>ECOR 10</strain>
        <strain>ECOR 11</strain>
        <strain>ECOR 12</strain>
        <strain>ECOR 13</strain>
        <strain>ECOR 14</strain>
        <strain>ECOR 15</strain>
        <strain>ECOR 16</strain>
        <strain>ECOR 17</strain>
        <strain>ECOR 18</strain>
        <strain>ECOR 19</strain>
        <strain>ECOR 2</strain>
        <strain>ECOR 20</strain>
        <strain>ECOR 21</strain>
        <strain>ECOR 22</strain>
        <strain>ECOR 24</strain>
        <strain>ECOR 25</strain>
        <strain>ECOR 26</strain>
        <strain>ECOR 27</strain>
        <strain>ECOR 3</strain>
        <strain>ECOR 30</strain>
        <strain>ECOR 33</strain>
        <strain>ECOR 34</strain>
        <strain>ECOR 35</strain>
        <strain>ECOR 36</strain>
        <strain>ECOR 37</strain>
        <strain>ECOR 38</strain>
        <strain>ECOR 4</strain>
        <strain>ECOR 40</strain>
        <strain>ECOR 41</strain>
        <strain>ECOR 42</strain>
        <strain>ECOR 43</strain>
        <strain>ECOR 44</strain>
        <strain>ECOR 45</strain>
        <strain>ECOR 46</strain>
        <strain>ECOR 47</strain>
        <strain>ECOR 48</strain>
        <strain>ECOR 5</strain>
        <strain>ECOR 51</strain>
        <strain>ECOR 52</strain>
        <strain>ECOR 53</strain>
        <strain>ECOR 54</strain>
        <strain>ECOR 55</strain>
        <strain>ECOR 56</strain>
        <strain>ECOR 57</strain>
        <strain>ECOR 59</strain>
        <strain>ECOR 6</strain>
        <strain>ECOR 60</strain>
        <strain>ECOR 61</strain>
        <strain>ECOR 62</strain>
        <strain>ECOR 63</strain>
        <strain>ECOR 64</strain>
        <strain>ECOR 65</strain>
        <strain>ECOR 66</strain>
        <strain>ECOR 67</strain>
        <strain>ECOR 68</strain>
        <strain>ECOR 69</strain>
        <strain>ECOR 7</strain>
        <strain>ECOR 70</strain>
        <strain>ECOR 71</strain>
        <strain>ECOR 72</strain>
        <strain>ECOR 8</strain>
        <strain>ECOR 9</strain>
        <strain>O2:HN / ECOR 50 / P97 / UPEC</strain>
    </source>
</reference>
<reference key="3">
    <citation type="journal article" date="1995" name="Nucleic Acids Res.">
        <title>Analysis of the Escherichia coli genome VI: DNA sequence of the region from 92.8 through 100 minutes.</title>
        <authorList>
            <person name="Burland V.D."/>
            <person name="Plunkett G. III"/>
            <person name="Sofia H.J."/>
            <person name="Daniels D.L."/>
            <person name="Blattner F.R."/>
        </authorList>
    </citation>
    <scope>NUCLEOTIDE SEQUENCE [LARGE SCALE GENOMIC DNA]</scope>
    <source>
        <strain>K12 / MG1655 / ATCC 47076</strain>
    </source>
</reference>
<reference key="4">
    <citation type="journal article" date="1997" name="Science">
        <title>The complete genome sequence of Escherichia coli K-12.</title>
        <authorList>
            <person name="Blattner F.R."/>
            <person name="Plunkett G. III"/>
            <person name="Bloch C.A."/>
            <person name="Perna N.T."/>
            <person name="Burland V."/>
            <person name="Riley M."/>
            <person name="Collado-Vides J."/>
            <person name="Glasner J.D."/>
            <person name="Rode C.K."/>
            <person name="Mayhew G.F."/>
            <person name="Gregor J."/>
            <person name="Davis N.W."/>
            <person name="Kirkpatrick H.A."/>
            <person name="Goeden M.A."/>
            <person name="Rose D.J."/>
            <person name="Mau B."/>
            <person name="Shao Y."/>
        </authorList>
    </citation>
    <scope>NUCLEOTIDE SEQUENCE [LARGE SCALE GENOMIC DNA]</scope>
    <source>
        <strain>K12 / MG1655 / ATCC 47076</strain>
    </source>
</reference>
<reference key="5">
    <citation type="journal article" date="2006" name="Mol. Syst. Biol.">
        <title>Highly accurate genome sequences of Escherichia coli K-12 strains MG1655 and W3110.</title>
        <authorList>
            <person name="Hayashi K."/>
            <person name="Morooka N."/>
            <person name="Yamamoto Y."/>
            <person name="Fujita K."/>
            <person name="Isono K."/>
            <person name="Choi S."/>
            <person name="Ohtsubo E."/>
            <person name="Baba T."/>
            <person name="Wanner B.L."/>
            <person name="Mori H."/>
            <person name="Horiuchi T."/>
        </authorList>
    </citation>
    <scope>NUCLEOTIDE SEQUENCE [LARGE SCALE GENOMIC DNA]</scope>
    <source>
        <strain>K12 / W3110 / ATCC 27325 / DSM 5911</strain>
    </source>
</reference>
<reference key="6">
    <citation type="journal article" date="2005" name="J. Biol. Chem.">
        <title>Functional characterization in vitro of all two-component signal transduction systems from Escherichia coli.</title>
        <authorList>
            <person name="Yamamoto K."/>
            <person name="Hirao K."/>
            <person name="Oshima T."/>
            <person name="Aiba H."/>
            <person name="Utsumi R."/>
            <person name="Ishihama A."/>
        </authorList>
    </citation>
    <scope>PHOSPHORYLATION</scope>
    <source>
        <strain>K12 / W3110 / ATCC 27325 / DSM 5911</strain>
    </source>
</reference>
<feature type="chain" id="PRO_0000081023" description="Transcriptional regulatory protein BasR">
    <location>
        <begin position="1"/>
        <end position="222"/>
    </location>
</feature>
<feature type="domain" description="Response regulatory" evidence="2">
    <location>
        <begin position="2"/>
        <end position="116"/>
    </location>
</feature>
<feature type="DNA-binding region" description="OmpR/PhoB-type" evidence="3">
    <location>
        <begin position="124"/>
        <end position="218"/>
    </location>
</feature>
<feature type="modified residue" description="4-aspartylphosphate" evidence="2">
    <location>
        <position position="51"/>
    </location>
</feature>
<feature type="sequence variant" description="In strain: ECOR 1, ECOR 10, ECOR 11, ECOR 12, ECOR 13, ECOR 14, ECOR 15, ECOR 16, ECOR 17, ECOR 18, ECOR 19, ECOR 2, ECOR 20, ECOR 21, ECOR 22, ECOR 24, ECOR 25, ECOR 26, ECOR 27, ECOR 3, ECOR 30, ECOR 33, ECOR 34, ECOR 35, ECOR 36, ECOR 37, ECOR 38, ECOR 4, ECOR 40, ECOR 41, ECOR 42, ECOR 43, ECOR 44, ECOR 45, ECOR 46, ECOR 47, ECOR 48, ECOR 5, ECOR 50, ECOR 51, ECOR 52, ECOR 53, ECOR 54, ECOR 55, ECOR 56, ECOR 57, ECOR 59, ECOR 6, ECOR 60, ECOR 61, ECOR 62, ECOR 63, ECOR 64, ECOR 65, ECOR 66, ECOR 67, ECOR 68, ECOR 69, ECOR 7, ECOR 70, ECOR 71, ECOR 72, ECOR 8 and ECOR 9.">
    <original>S</original>
    <variation>G</variation>
    <location>
        <position position="29"/>
    </location>
</feature>
<feature type="sequence variant" description="In strain: ECOR 35, ECOR 36, ECOR 38, ECOR 40, ECOR 41, ECOR 51, ECOR 52, ECOR 53, ECOR 54, ECOR 55, ECOR 56, ECOR 57, ECOR 59, ECOR 60, ECOR 61, ECOR 62, ECOR 63 and ECOR 64, ECOR 65 and ECOR 66.">
    <original>T</original>
    <variation>S</variation>
    <location>
        <position position="31"/>
    </location>
</feature>
<feature type="sequence variant" description="In strain: ECOR 51, ECOR 52, ECOR 53, ECOR 54, ECOR 55, ECOR 56, ECOR 57, ECOR 59, ECOR 60, ECOR 61, ECOR 62, ECOR 63 and ECOR 64.">
    <original>I</original>
    <variation>N</variation>
    <location>
        <position position="128"/>
    </location>
</feature>
<feature type="sequence variant" description="In strain: ECOR 19.">
    <original>V</original>
    <variation>L</variation>
    <location>
        <position position="129"/>
    </location>
</feature>
<feature type="sequence variant" description="In strain: ECOR 44, ECOR 48, ECOR 50, ECOR 51, ECOR 52, ECOR 53, ECOR 54, ECOR 55, ECOR 56, ECOR 57, ECOR 59, ECOR 60, ECOR 61, ECOR 62, ECOR 63, ECOR 64 and ECOR 72.">
    <original>G</original>
    <variation>S</variation>
    <location>
        <position position="144"/>
    </location>
</feature>
<feature type="sequence variant" description="In strain: ECOR 27.">
    <original>R</original>
    <variation>P</variation>
    <location>
        <position position="207"/>
    </location>
</feature>
<feature type="sequence variant" description="In strain: ECOR 27.">
    <original>Y</original>
    <variation>F</variation>
    <location>
        <position position="214"/>
    </location>
</feature>
<feature type="sequence conflict" description="In Ref. 1." evidence="5" ref="1">
    <original>S</original>
    <variation>T</variation>
    <location>
        <position position="29"/>
    </location>
</feature>
<accession>P30843</accession>
<accession>Q2M6J1</accession>
<accession>Q5MNC7</accession>
<accession>Q5MNC9</accession>
<accession>Q5MNE0</accession>
<accession>Q5MNE5</accession>
<accession>Q5MNF2</accession>
<accession>Q5MNH0</accession>
<name>BASR_ECOLI</name>
<keyword id="KW-0010">Activator</keyword>
<keyword id="KW-0046">Antibiotic resistance</keyword>
<keyword id="KW-0963">Cytoplasm</keyword>
<keyword id="KW-0238">DNA-binding</keyword>
<keyword id="KW-0597">Phosphoprotein</keyword>
<keyword id="KW-1185">Reference proteome</keyword>
<keyword id="KW-0804">Transcription</keyword>
<keyword id="KW-0805">Transcription regulation</keyword>
<keyword id="KW-0902">Two-component regulatory system</keyword>
<gene>
    <name type="primary">basR</name>
    <name type="synonym">pmrA</name>
    <name type="ordered locus">b4113</name>
    <name type="ordered locus">JW4074</name>
</gene>
<evidence type="ECO:0000250" key="1"/>
<evidence type="ECO:0000255" key="2">
    <source>
        <dbReference type="PROSITE-ProRule" id="PRU00169"/>
    </source>
</evidence>
<evidence type="ECO:0000255" key="3">
    <source>
        <dbReference type="PROSITE-ProRule" id="PRU01091"/>
    </source>
</evidence>
<evidence type="ECO:0000269" key="4">
    <source>
    </source>
</evidence>
<evidence type="ECO:0000305" key="5"/>
<sequence length="222" mass="25031">MKILIVEDDTLLLQGLILAAQTEGYACDSVTTARMAEQSLEAGHYSLVVLDLGLPDEDGLHFLARIRQKKYTLPVLILTARDTLTDKIAGLDVGADDYLVKPFALEELHARIRALLRRHNNQGESELIVGNLTLNMGRRQVWMGGEELILTPKEYALLSRLMLKAGSPVHREILYNDIYNWDNEPSTNTLEVHIHNLRDKVGKARIRTVRGFGYMLVANEEN</sequence>
<proteinExistence type="evidence at protein level"/>
<comment type="function">
    <text evidence="1">Member of the two-component regulatory system BasS/BasR. BasR induces the transcription of the ugd, ais, arnBCADTEF and eptA-basRS loci, all involved in resistance to polymyxin (By similarity).</text>
</comment>
<comment type="subunit">
    <text evidence="1">Homodimer.</text>
</comment>
<comment type="subcellular location">
    <subcellularLocation>
        <location evidence="5">Cytoplasm</location>
    </subcellularLocation>
</comment>
<comment type="induction">
    <text evidence="1">The eptA-basRS operon is positively autoregulated by BasR under high iron or aluminum concentration conditions.</text>
</comment>
<comment type="PTM">
    <text evidence="4">Phosphorylated by BasS.</text>
</comment>
<comment type="miscellaneous">
    <text>The activity of the BasR protein is in some natural isolates, but not in strain K12, controlled at a post-transcriptional level by the PmrD protein under low Mg(2+) concentration conditions.</text>
</comment>